<feature type="chain" id="PRO_0000337358" description="Elongation factor Tu">
    <location>
        <begin position="1"/>
        <end position="397"/>
    </location>
</feature>
<feature type="domain" description="tr-type G">
    <location>
        <begin position="10"/>
        <end position="206"/>
    </location>
</feature>
<feature type="region of interest" description="G1" evidence="1">
    <location>
        <begin position="19"/>
        <end position="26"/>
    </location>
</feature>
<feature type="region of interest" description="G2" evidence="1">
    <location>
        <begin position="60"/>
        <end position="64"/>
    </location>
</feature>
<feature type="region of interest" description="G3" evidence="1">
    <location>
        <begin position="81"/>
        <end position="84"/>
    </location>
</feature>
<feature type="region of interest" description="G4" evidence="1">
    <location>
        <begin position="136"/>
        <end position="139"/>
    </location>
</feature>
<feature type="region of interest" description="G5" evidence="1">
    <location>
        <begin position="174"/>
        <end position="176"/>
    </location>
</feature>
<feature type="binding site" evidence="2">
    <location>
        <begin position="19"/>
        <end position="26"/>
    </location>
    <ligand>
        <name>GTP</name>
        <dbReference type="ChEBI" id="CHEBI:37565"/>
    </ligand>
</feature>
<feature type="binding site" evidence="2">
    <location>
        <position position="26"/>
    </location>
    <ligand>
        <name>Mg(2+)</name>
        <dbReference type="ChEBI" id="CHEBI:18420"/>
    </ligand>
</feature>
<feature type="binding site" evidence="2">
    <location>
        <begin position="81"/>
        <end position="85"/>
    </location>
    <ligand>
        <name>GTP</name>
        <dbReference type="ChEBI" id="CHEBI:37565"/>
    </ligand>
</feature>
<feature type="binding site" evidence="2">
    <location>
        <begin position="136"/>
        <end position="139"/>
    </location>
    <ligand>
        <name>GTP</name>
        <dbReference type="ChEBI" id="CHEBI:37565"/>
    </ligand>
</feature>
<accession>A7GJ76</accession>
<gene>
    <name evidence="2" type="primary">tuf1</name>
    <name type="ordered locus">CLI_3665</name>
</gene>
<gene>
    <name evidence="2" type="primary">tuf2</name>
    <name type="ordered locus">CLI_3679</name>
</gene>
<proteinExistence type="inferred from homology"/>
<evidence type="ECO:0000250" key="1"/>
<evidence type="ECO:0000255" key="2">
    <source>
        <dbReference type="HAMAP-Rule" id="MF_00118"/>
    </source>
</evidence>
<sequence length="397" mass="43483">MAKAKFERSKPHVNIGTIGHVDHGKTTLTAAITTVLAQKGGASATKYDEIDKAPEEKERGITINTSHVEYETANRHYAHVDCPGHADYVKNMITGAAQMDGAILVVSAADGPMPQTREHILLASRVGVQYIVVFLNKADQVDDPELIELVEMEVRELLNEYGFPGDDTPIVVGSALEVLENQDNAEKTKCIDELMEAIDSYIPTPERATDQPFLMPVEDVFTITGRGTVATGRVERGVLHTGDEVELIGMKQEVSKTVCTGIEMFRKILDEAMAGDNIGALLRGIQRDEIQRGQVLAKPGSVTPHKKFVGQVYVLKKEEGGRHTPFFNGYRPQFYFRTTDVTGSINLPEGVEMVMPGDHIDMAVELITPVAMHENLRFAIREGGRTVGSGVVTTISE</sequence>
<name>EFTU_CLOBL</name>
<organism>
    <name type="scientific">Clostridium botulinum (strain Langeland / NCTC 10281 / Type F)</name>
    <dbReference type="NCBI Taxonomy" id="441772"/>
    <lineage>
        <taxon>Bacteria</taxon>
        <taxon>Bacillati</taxon>
        <taxon>Bacillota</taxon>
        <taxon>Clostridia</taxon>
        <taxon>Eubacteriales</taxon>
        <taxon>Clostridiaceae</taxon>
        <taxon>Clostridium</taxon>
    </lineage>
</organism>
<keyword id="KW-0963">Cytoplasm</keyword>
<keyword id="KW-0251">Elongation factor</keyword>
<keyword id="KW-0342">GTP-binding</keyword>
<keyword id="KW-0378">Hydrolase</keyword>
<keyword id="KW-0460">Magnesium</keyword>
<keyword id="KW-0479">Metal-binding</keyword>
<keyword id="KW-0547">Nucleotide-binding</keyword>
<keyword id="KW-0648">Protein biosynthesis</keyword>
<comment type="function">
    <text evidence="2">GTP hydrolase that promotes the GTP-dependent binding of aminoacyl-tRNA to the A-site of ribosomes during protein biosynthesis.</text>
</comment>
<comment type="catalytic activity">
    <reaction evidence="2">
        <text>GTP + H2O = GDP + phosphate + H(+)</text>
        <dbReference type="Rhea" id="RHEA:19669"/>
        <dbReference type="ChEBI" id="CHEBI:15377"/>
        <dbReference type="ChEBI" id="CHEBI:15378"/>
        <dbReference type="ChEBI" id="CHEBI:37565"/>
        <dbReference type="ChEBI" id="CHEBI:43474"/>
        <dbReference type="ChEBI" id="CHEBI:58189"/>
        <dbReference type="EC" id="3.6.5.3"/>
    </reaction>
    <physiologicalReaction direction="left-to-right" evidence="2">
        <dbReference type="Rhea" id="RHEA:19670"/>
    </physiologicalReaction>
</comment>
<comment type="subunit">
    <text evidence="2">Monomer.</text>
</comment>
<comment type="subcellular location">
    <subcellularLocation>
        <location evidence="2">Cytoplasm</location>
    </subcellularLocation>
</comment>
<comment type="similarity">
    <text evidence="2">Belongs to the TRAFAC class translation factor GTPase superfamily. Classic translation factor GTPase family. EF-Tu/EF-1A subfamily.</text>
</comment>
<protein>
    <recommendedName>
        <fullName evidence="2">Elongation factor Tu</fullName>
        <shortName evidence="2">EF-Tu</shortName>
        <ecNumber evidence="2">3.6.5.3</ecNumber>
    </recommendedName>
</protein>
<dbReference type="EC" id="3.6.5.3" evidence="2"/>
<dbReference type="EMBL" id="CP000728">
    <property type="protein sequence ID" value="ABS40668.1"/>
    <property type="molecule type" value="Genomic_DNA"/>
</dbReference>
<dbReference type="EMBL" id="CP000728">
    <property type="protein sequence ID" value="ABS42648.1"/>
    <property type="molecule type" value="Genomic_DNA"/>
</dbReference>
<dbReference type="SMR" id="A7GJ76"/>
<dbReference type="KEGG" id="cbf:CLI_3665"/>
<dbReference type="KEGG" id="cbf:CLI_3679"/>
<dbReference type="HOGENOM" id="CLU_007265_0_0_9"/>
<dbReference type="Proteomes" id="UP000002410">
    <property type="component" value="Chromosome"/>
</dbReference>
<dbReference type="GO" id="GO:0005829">
    <property type="term" value="C:cytosol"/>
    <property type="evidence" value="ECO:0007669"/>
    <property type="project" value="TreeGrafter"/>
</dbReference>
<dbReference type="GO" id="GO:0005525">
    <property type="term" value="F:GTP binding"/>
    <property type="evidence" value="ECO:0007669"/>
    <property type="project" value="UniProtKB-UniRule"/>
</dbReference>
<dbReference type="GO" id="GO:0003924">
    <property type="term" value="F:GTPase activity"/>
    <property type="evidence" value="ECO:0007669"/>
    <property type="project" value="InterPro"/>
</dbReference>
<dbReference type="GO" id="GO:0003746">
    <property type="term" value="F:translation elongation factor activity"/>
    <property type="evidence" value="ECO:0007669"/>
    <property type="project" value="UniProtKB-UniRule"/>
</dbReference>
<dbReference type="CDD" id="cd01884">
    <property type="entry name" value="EF_Tu"/>
    <property type="match status" value="1"/>
</dbReference>
<dbReference type="CDD" id="cd03697">
    <property type="entry name" value="EFTU_II"/>
    <property type="match status" value="1"/>
</dbReference>
<dbReference type="CDD" id="cd03707">
    <property type="entry name" value="EFTU_III"/>
    <property type="match status" value="1"/>
</dbReference>
<dbReference type="FunFam" id="2.40.30.10:FF:000001">
    <property type="entry name" value="Elongation factor Tu"/>
    <property type="match status" value="1"/>
</dbReference>
<dbReference type="FunFam" id="3.40.50.300:FF:000003">
    <property type="entry name" value="Elongation factor Tu"/>
    <property type="match status" value="1"/>
</dbReference>
<dbReference type="Gene3D" id="3.40.50.300">
    <property type="entry name" value="P-loop containing nucleotide triphosphate hydrolases"/>
    <property type="match status" value="1"/>
</dbReference>
<dbReference type="Gene3D" id="2.40.30.10">
    <property type="entry name" value="Translation factors"/>
    <property type="match status" value="2"/>
</dbReference>
<dbReference type="HAMAP" id="MF_00118_B">
    <property type="entry name" value="EF_Tu_B"/>
    <property type="match status" value="1"/>
</dbReference>
<dbReference type="InterPro" id="IPR041709">
    <property type="entry name" value="EF-Tu_GTP-bd"/>
</dbReference>
<dbReference type="InterPro" id="IPR050055">
    <property type="entry name" value="EF-Tu_GTPase"/>
</dbReference>
<dbReference type="InterPro" id="IPR004161">
    <property type="entry name" value="EFTu-like_2"/>
</dbReference>
<dbReference type="InterPro" id="IPR033720">
    <property type="entry name" value="EFTU_2"/>
</dbReference>
<dbReference type="InterPro" id="IPR031157">
    <property type="entry name" value="G_TR_CS"/>
</dbReference>
<dbReference type="InterPro" id="IPR027417">
    <property type="entry name" value="P-loop_NTPase"/>
</dbReference>
<dbReference type="InterPro" id="IPR005225">
    <property type="entry name" value="Small_GTP-bd"/>
</dbReference>
<dbReference type="InterPro" id="IPR000795">
    <property type="entry name" value="T_Tr_GTP-bd_dom"/>
</dbReference>
<dbReference type="InterPro" id="IPR009000">
    <property type="entry name" value="Transl_B-barrel_sf"/>
</dbReference>
<dbReference type="InterPro" id="IPR009001">
    <property type="entry name" value="Transl_elong_EF1A/Init_IF2_C"/>
</dbReference>
<dbReference type="InterPro" id="IPR004541">
    <property type="entry name" value="Transl_elong_EFTu/EF1A_bac/org"/>
</dbReference>
<dbReference type="InterPro" id="IPR004160">
    <property type="entry name" value="Transl_elong_EFTu/EF1A_C"/>
</dbReference>
<dbReference type="NCBIfam" id="TIGR00485">
    <property type="entry name" value="EF-Tu"/>
    <property type="match status" value="1"/>
</dbReference>
<dbReference type="NCBIfam" id="NF000766">
    <property type="entry name" value="PRK00049.1"/>
    <property type="match status" value="1"/>
</dbReference>
<dbReference type="NCBIfam" id="NF009372">
    <property type="entry name" value="PRK12735.1"/>
    <property type="match status" value="1"/>
</dbReference>
<dbReference type="NCBIfam" id="NF009373">
    <property type="entry name" value="PRK12736.1"/>
    <property type="match status" value="1"/>
</dbReference>
<dbReference type="NCBIfam" id="TIGR00231">
    <property type="entry name" value="small_GTP"/>
    <property type="match status" value="1"/>
</dbReference>
<dbReference type="PANTHER" id="PTHR43721:SF22">
    <property type="entry name" value="ELONGATION FACTOR TU, MITOCHONDRIAL"/>
    <property type="match status" value="1"/>
</dbReference>
<dbReference type="PANTHER" id="PTHR43721">
    <property type="entry name" value="ELONGATION FACTOR TU-RELATED"/>
    <property type="match status" value="1"/>
</dbReference>
<dbReference type="Pfam" id="PF00009">
    <property type="entry name" value="GTP_EFTU"/>
    <property type="match status" value="1"/>
</dbReference>
<dbReference type="Pfam" id="PF03144">
    <property type="entry name" value="GTP_EFTU_D2"/>
    <property type="match status" value="1"/>
</dbReference>
<dbReference type="Pfam" id="PF03143">
    <property type="entry name" value="GTP_EFTU_D3"/>
    <property type="match status" value="1"/>
</dbReference>
<dbReference type="PRINTS" id="PR00315">
    <property type="entry name" value="ELONGATNFCT"/>
</dbReference>
<dbReference type="SUPFAM" id="SSF50465">
    <property type="entry name" value="EF-Tu/eEF-1alpha/eIF2-gamma C-terminal domain"/>
    <property type="match status" value="1"/>
</dbReference>
<dbReference type="SUPFAM" id="SSF52540">
    <property type="entry name" value="P-loop containing nucleoside triphosphate hydrolases"/>
    <property type="match status" value="1"/>
</dbReference>
<dbReference type="SUPFAM" id="SSF50447">
    <property type="entry name" value="Translation proteins"/>
    <property type="match status" value="1"/>
</dbReference>
<dbReference type="PROSITE" id="PS00301">
    <property type="entry name" value="G_TR_1"/>
    <property type="match status" value="1"/>
</dbReference>
<dbReference type="PROSITE" id="PS51722">
    <property type="entry name" value="G_TR_2"/>
    <property type="match status" value="1"/>
</dbReference>
<reference key="1">
    <citation type="submission" date="2007-06" db="EMBL/GenBank/DDBJ databases">
        <authorList>
            <person name="Brinkac L.M."/>
            <person name="Daugherty S."/>
            <person name="Dodson R.J."/>
            <person name="Madupu R."/>
            <person name="Brown J.L."/>
            <person name="Bruce D."/>
            <person name="Detter C."/>
            <person name="Munk C."/>
            <person name="Smith L.A."/>
            <person name="Smith T.J."/>
            <person name="White O."/>
            <person name="Brettin T.S."/>
        </authorList>
    </citation>
    <scope>NUCLEOTIDE SEQUENCE [LARGE SCALE GENOMIC DNA]</scope>
    <source>
        <strain>Langeland / NCTC 10281 / Type F</strain>
    </source>
</reference>